<comment type="catalytic activity">
    <reaction>
        <text>an acyl phosphate + H2O = a carboxylate + phosphate + H(+)</text>
        <dbReference type="Rhea" id="RHEA:14965"/>
        <dbReference type="ChEBI" id="CHEBI:15377"/>
        <dbReference type="ChEBI" id="CHEBI:15378"/>
        <dbReference type="ChEBI" id="CHEBI:29067"/>
        <dbReference type="ChEBI" id="CHEBI:43474"/>
        <dbReference type="ChEBI" id="CHEBI:59918"/>
        <dbReference type="EC" id="3.6.1.7"/>
    </reaction>
</comment>
<comment type="similarity">
    <text evidence="2">Belongs to the acylphosphatase family.</text>
</comment>
<dbReference type="EC" id="3.6.1.7"/>
<dbReference type="EMBL" id="AM263198">
    <property type="protein sequence ID" value="CAK20815.1"/>
    <property type="molecule type" value="Genomic_DNA"/>
</dbReference>
<dbReference type="RefSeq" id="WP_011702193.1">
    <property type="nucleotide sequence ID" value="NC_008555.1"/>
</dbReference>
<dbReference type="SMR" id="A0AII3"/>
<dbReference type="STRING" id="386043.lwe1397"/>
<dbReference type="GeneID" id="61189273"/>
<dbReference type="KEGG" id="lwe:lwe1397"/>
<dbReference type="eggNOG" id="COG1254">
    <property type="taxonomic scope" value="Bacteria"/>
</dbReference>
<dbReference type="HOGENOM" id="CLU_141932_1_2_9"/>
<dbReference type="OrthoDB" id="9808093at2"/>
<dbReference type="Proteomes" id="UP000000779">
    <property type="component" value="Chromosome"/>
</dbReference>
<dbReference type="GO" id="GO:0003998">
    <property type="term" value="F:acylphosphatase activity"/>
    <property type="evidence" value="ECO:0007669"/>
    <property type="project" value="UniProtKB-EC"/>
</dbReference>
<dbReference type="Gene3D" id="3.30.70.100">
    <property type="match status" value="1"/>
</dbReference>
<dbReference type="InterPro" id="IPR020456">
    <property type="entry name" value="Acylphosphatase"/>
</dbReference>
<dbReference type="InterPro" id="IPR001792">
    <property type="entry name" value="Acylphosphatase-like_dom"/>
</dbReference>
<dbReference type="InterPro" id="IPR036046">
    <property type="entry name" value="Acylphosphatase-like_dom_sf"/>
</dbReference>
<dbReference type="InterPro" id="IPR017968">
    <property type="entry name" value="Acylphosphatase_CS"/>
</dbReference>
<dbReference type="NCBIfam" id="NF011015">
    <property type="entry name" value="PRK14443.1"/>
    <property type="match status" value="1"/>
</dbReference>
<dbReference type="PANTHER" id="PTHR47268">
    <property type="entry name" value="ACYLPHOSPHATASE"/>
    <property type="match status" value="1"/>
</dbReference>
<dbReference type="PANTHER" id="PTHR47268:SF4">
    <property type="entry name" value="ACYLPHOSPHATASE"/>
    <property type="match status" value="1"/>
</dbReference>
<dbReference type="Pfam" id="PF00708">
    <property type="entry name" value="Acylphosphatase"/>
    <property type="match status" value="1"/>
</dbReference>
<dbReference type="SUPFAM" id="SSF54975">
    <property type="entry name" value="Acylphosphatase/BLUF domain-like"/>
    <property type="match status" value="1"/>
</dbReference>
<dbReference type="PROSITE" id="PS00150">
    <property type="entry name" value="ACYLPHOSPHATASE_1"/>
    <property type="match status" value="1"/>
</dbReference>
<dbReference type="PROSITE" id="PS51160">
    <property type="entry name" value="ACYLPHOSPHATASE_3"/>
    <property type="match status" value="1"/>
</dbReference>
<feature type="chain" id="PRO_0000326742" description="Acylphosphatase">
    <location>
        <begin position="1"/>
        <end position="93"/>
    </location>
</feature>
<feature type="domain" description="Acylphosphatase-like" evidence="1">
    <location>
        <begin position="5"/>
        <end position="93"/>
    </location>
</feature>
<feature type="active site" evidence="1">
    <location>
        <position position="20"/>
    </location>
</feature>
<feature type="active site" evidence="1">
    <location>
        <position position="38"/>
    </location>
</feature>
<sequence length="93" mass="10438">MARDTAILRVTGFVQGVGFRYTTKHVAYKYDVSGTVKNLDDGSVEIHAIAEEENLNKFIDAIKKGPSPGCRIEHVYIYKGAPVEDRKTFDIVY</sequence>
<gene>
    <name type="primary">acyP</name>
    <name type="ordered locus">lwe1397</name>
</gene>
<reference key="1">
    <citation type="journal article" date="2006" name="J. Bacteriol.">
        <title>Whole-genome sequence of Listeria welshimeri reveals common steps in genome reduction with Listeria innocua as compared to Listeria monocytogenes.</title>
        <authorList>
            <person name="Hain T."/>
            <person name="Steinweg C."/>
            <person name="Kuenne C.T."/>
            <person name="Billion A."/>
            <person name="Ghai R."/>
            <person name="Chatterjee S.S."/>
            <person name="Domann E."/>
            <person name="Kaerst U."/>
            <person name="Goesmann A."/>
            <person name="Bekel T."/>
            <person name="Bartels D."/>
            <person name="Kaiser O."/>
            <person name="Meyer F."/>
            <person name="Puehler A."/>
            <person name="Weisshaar B."/>
            <person name="Wehland J."/>
            <person name="Liang C."/>
            <person name="Dandekar T."/>
            <person name="Lampidis R."/>
            <person name="Kreft J."/>
            <person name="Goebel W."/>
            <person name="Chakraborty T."/>
        </authorList>
    </citation>
    <scope>NUCLEOTIDE SEQUENCE [LARGE SCALE GENOMIC DNA]</scope>
    <source>
        <strain>ATCC 35897 / DSM 20650 / CCUG 15529 / CIP 8149 / NCTC 11857 / SLCC 5334 / V8</strain>
    </source>
</reference>
<name>ACYP_LISW6</name>
<organism>
    <name type="scientific">Listeria welshimeri serovar 6b (strain ATCC 35897 / DSM 20650 / CCUG 15529 / CIP 8149 / NCTC 11857 / SLCC 5334 / V8)</name>
    <dbReference type="NCBI Taxonomy" id="386043"/>
    <lineage>
        <taxon>Bacteria</taxon>
        <taxon>Bacillati</taxon>
        <taxon>Bacillota</taxon>
        <taxon>Bacilli</taxon>
        <taxon>Bacillales</taxon>
        <taxon>Listeriaceae</taxon>
        <taxon>Listeria</taxon>
    </lineage>
</organism>
<proteinExistence type="inferred from homology"/>
<accession>A0AII3</accession>
<protein>
    <recommendedName>
        <fullName>Acylphosphatase</fullName>
        <ecNumber>3.6.1.7</ecNumber>
    </recommendedName>
    <alternativeName>
        <fullName>Acylphosphate phosphohydrolase</fullName>
    </alternativeName>
</protein>
<evidence type="ECO:0000255" key="1">
    <source>
        <dbReference type="PROSITE-ProRule" id="PRU00520"/>
    </source>
</evidence>
<evidence type="ECO:0000305" key="2"/>
<keyword id="KW-0378">Hydrolase</keyword>